<name>CHED_CAUVN</name>
<dbReference type="EC" id="3.5.1.44" evidence="1"/>
<dbReference type="EMBL" id="CP001340">
    <property type="protein sequence ID" value="ACL93914.1"/>
    <property type="molecule type" value="Genomic_DNA"/>
</dbReference>
<dbReference type="RefSeq" id="WP_010918326.1">
    <property type="nucleotide sequence ID" value="NC_011916.1"/>
</dbReference>
<dbReference type="RefSeq" id="YP_002515822.1">
    <property type="nucleotide sequence ID" value="NC_011916.1"/>
</dbReference>
<dbReference type="SMR" id="B8GZ98"/>
<dbReference type="GeneID" id="7330574"/>
<dbReference type="KEGG" id="ccs:CCNA_00447"/>
<dbReference type="PATRIC" id="fig|565050.3.peg.444"/>
<dbReference type="HOGENOM" id="CLU_087854_0_1_5"/>
<dbReference type="OrthoDB" id="9807202at2"/>
<dbReference type="PhylomeDB" id="B8GZ98"/>
<dbReference type="Proteomes" id="UP000001364">
    <property type="component" value="Chromosome"/>
</dbReference>
<dbReference type="GO" id="GO:0050568">
    <property type="term" value="F:protein-glutamine glutaminase activity"/>
    <property type="evidence" value="ECO:0007669"/>
    <property type="project" value="UniProtKB-UniRule"/>
</dbReference>
<dbReference type="GO" id="GO:0006935">
    <property type="term" value="P:chemotaxis"/>
    <property type="evidence" value="ECO:0007669"/>
    <property type="project" value="UniProtKB-UniRule"/>
</dbReference>
<dbReference type="CDD" id="cd16352">
    <property type="entry name" value="CheD"/>
    <property type="match status" value="1"/>
</dbReference>
<dbReference type="Gene3D" id="3.30.1330.200">
    <property type="match status" value="1"/>
</dbReference>
<dbReference type="HAMAP" id="MF_01440">
    <property type="entry name" value="CheD"/>
    <property type="match status" value="1"/>
</dbReference>
<dbReference type="InterPro" id="IPR038592">
    <property type="entry name" value="CheD-like_sf"/>
</dbReference>
<dbReference type="InterPro" id="IPR005659">
    <property type="entry name" value="Chemorcpt_Glu_NH3ase_CheD"/>
</dbReference>
<dbReference type="InterPro" id="IPR011324">
    <property type="entry name" value="Cytotoxic_necrot_fac-like_cat"/>
</dbReference>
<dbReference type="PANTHER" id="PTHR35147">
    <property type="entry name" value="CHEMORECEPTOR GLUTAMINE DEAMIDASE CHED-RELATED"/>
    <property type="match status" value="1"/>
</dbReference>
<dbReference type="PANTHER" id="PTHR35147:SF2">
    <property type="entry name" value="CHEMORECEPTOR GLUTAMINE DEAMIDASE CHED-RELATED"/>
    <property type="match status" value="1"/>
</dbReference>
<dbReference type="Pfam" id="PF03975">
    <property type="entry name" value="CheD"/>
    <property type="match status" value="1"/>
</dbReference>
<dbReference type="SUPFAM" id="SSF64438">
    <property type="entry name" value="CNF1/YfiH-like putative cysteine hydrolases"/>
    <property type="match status" value="1"/>
</dbReference>
<proteinExistence type="inferred from homology"/>
<evidence type="ECO:0000255" key="1">
    <source>
        <dbReference type="HAMAP-Rule" id="MF_01440"/>
    </source>
</evidence>
<evidence type="ECO:0000256" key="2">
    <source>
        <dbReference type="SAM" id="MobiDB-lite"/>
    </source>
</evidence>
<accession>B8GZ98</accession>
<sequence>MTSFHHDDPERAVKVHVTQGESHVTADPNVVMTTVLGSCIAACIRDPQSGVGGMNHFLLPDSGDGRRDGDAVRYGAYAMEVLINDLLKRGARRERLEAKIFGGAKLFDGLSDVGASNAAFAERFLRDEGIPIVSSSTGGVSARRVEFWPASGRVRQRLVAVDNAPQDVRRPTPPPMPAVASGDVDLF</sequence>
<feature type="chain" id="PRO_1000184921" description="Probable chemoreceptor glutamine deamidase CheD">
    <location>
        <begin position="1"/>
        <end position="187"/>
    </location>
</feature>
<feature type="region of interest" description="Disordered" evidence="2">
    <location>
        <begin position="164"/>
        <end position="187"/>
    </location>
</feature>
<keyword id="KW-0145">Chemotaxis</keyword>
<keyword id="KW-0378">Hydrolase</keyword>
<keyword id="KW-1185">Reference proteome</keyword>
<gene>
    <name evidence="1" type="primary">cheD</name>
    <name type="ordered locus">CCNA_00447</name>
</gene>
<organism>
    <name type="scientific">Caulobacter vibrioides (strain NA1000 / CB15N)</name>
    <name type="common">Caulobacter crescentus</name>
    <dbReference type="NCBI Taxonomy" id="565050"/>
    <lineage>
        <taxon>Bacteria</taxon>
        <taxon>Pseudomonadati</taxon>
        <taxon>Pseudomonadota</taxon>
        <taxon>Alphaproteobacteria</taxon>
        <taxon>Caulobacterales</taxon>
        <taxon>Caulobacteraceae</taxon>
        <taxon>Caulobacter</taxon>
    </lineage>
</organism>
<comment type="function">
    <text evidence="1">Probably deamidates glutamine residues to glutamate on methyl-accepting chemotaxis receptors (MCPs), playing an important role in chemotaxis.</text>
</comment>
<comment type="catalytic activity">
    <reaction evidence="1">
        <text>L-glutaminyl-[protein] + H2O = L-glutamyl-[protein] + NH4(+)</text>
        <dbReference type="Rhea" id="RHEA:16441"/>
        <dbReference type="Rhea" id="RHEA-COMP:10207"/>
        <dbReference type="Rhea" id="RHEA-COMP:10208"/>
        <dbReference type="ChEBI" id="CHEBI:15377"/>
        <dbReference type="ChEBI" id="CHEBI:28938"/>
        <dbReference type="ChEBI" id="CHEBI:29973"/>
        <dbReference type="ChEBI" id="CHEBI:30011"/>
        <dbReference type="EC" id="3.5.1.44"/>
    </reaction>
</comment>
<comment type="similarity">
    <text evidence="1">Belongs to the CheD family.</text>
</comment>
<reference key="1">
    <citation type="journal article" date="2010" name="J. Bacteriol.">
        <title>The genetic basis of laboratory adaptation in Caulobacter crescentus.</title>
        <authorList>
            <person name="Marks M.E."/>
            <person name="Castro-Rojas C.M."/>
            <person name="Teiling C."/>
            <person name="Du L."/>
            <person name="Kapatral V."/>
            <person name="Walunas T.L."/>
            <person name="Crosson S."/>
        </authorList>
    </citation>
    <scope>NUCLEOTIDE SEQUENCE [LARGE SCALE GENOMIC DNA]</scope>
    <source>
        <strain>NA1000 / CB15N</strain>
    </source>
</reference>
<protein>
    <recommendedName>
        <fullName evidence="1">Probable chemoreceptor glutamine deamidase CheD</fullName>
        <ecNumber evidence="1">3.5.1.44</ecNumber>
    </recommendedName>
</protein>